<feature type="chain" id="PRO_1000053298" description="ATP synthase gamma chain">
    <location>
        <begin position="1"/>
        <end position="293"/>
    </location>
</feature>
<reference key="1">
    <citation type="submission" date="2006-03" db="EMBL/GenBank/DDBJ databases">
        <title>Complete sequence of chromosome of Psychrobacter cryohalolentis K5.</title>
        <authorList>
            <consortium name="US DOE Joint Genome Institute"/>
            <person name="Copeland A."/>
            <person name="Lucas S."/>
            <person name="Lapidus A."/>
            <person name="Barry K."/>
            <person name="Detter J.C."/>
            <person name="Glavina T."/>
            <person name="Hammon N."/>
            <person name="Israni S."/>
            <person name="Dalin E."/>
            <person name="Tice H."/>
            <person name="Pitluck S."/>
            <person name="Brettin T."/>
            <person name="Bruce D."/>
            <person name="Han C."/>
            <person name="Tapia R."/>
            <person name="Sims D.R."/>
            <person name="Gilna P."/>
            <person name="Schmutz J."/>
            <person name="Larimer F."/>
            <person name="Land M."/>
            <person name="Hauser L."/>
            <person name="Kyrpides N."/>
            <person name="Kim E."/>
            <person name="Richardson P."/>
        </authorList>
    </citation>
    <scope>NUCLEOTIDE SEQUENCE [LARGE SCALE GENOMIC DNA]</scope>
    <source>
        <strain>ATCC BAA-1226 / DSM 17306 / VKM B-2378 / K5</strain>
    </source>
</reference>
<dbReference type="EMBL" id="CP000323">
    <property type="protein sequence ID" value="ABE76105.1"/>
    <property type="molecule type" value="Genomic_DNA"/>
</dbReference>
<dbReference type="RefSeq" id="WP_011514634.1">
    <property type="nucleotide sequence ID" value="NC_007969.1"/>
</dbReference>
<dbReference type="SMR" id="Q1Q898"/>
<dbReference type="STRING" id="335284.Pcryo_2328"/>
<dbReference type="KEGG" id="pcr:Pcryo_2328"/>
<dbReference type="eggNOG" id="COG0224">
    <property type="taxonomic scope" value="Bacteria"/>
</dbReference>
<dbReference type="HOGENOM" id="CLU_050669_0_1_6"/>
<dbReference type="Proteomes" id="UP000002425">
    <property type="component" value="Chromosome"/>
</dbReference>
<dbReference type="GO" id="GO:0005886">
    <property type="term" value="C:plasma membrane"/>
    <property type="evidence" value="ECO:0007669"/>
    <property type="project" value="UniProtKB-SubCell"/>
</dbReference>
<dbReference type="GO" id="GO:0045259">
    <property type="term" value="C:proton-transporting ATP synthase complex"/>
    <property type="evidence" value="ECO:0007669"/>
    <property type="project" value="UniProtKB-KW"/>
</dbReference>
<dbReference type="GO" id="GO:0005524">
    <property type="term" value="F:ATP binding"/>
    <property type="evidence" value="ECO:0007669"/>
    <property type="project" value="UniProtKB-UniRule"/>
</dbReference>
<dbReference type="GO" id="GO:0046933">
    <property type="term" value="F:proton-transporting ATP synthase activity, rotational mechanism"/>
    <property type="evidence" value="ECO:0007669"/>
    <property type="project" value="UniProtKB-UniRule"/>
</dbReference>
<dbReference type="GO" id="GO:0042777">
    <property type="term" value="P:proton motive force-driven plasma membrane ATP synthesis"/>
    <property type="evidence" value="ECO:0007669"/>
    <property type="project" value="UniProtKB-UniRule"/>
</dbReference>
<dbReference type="CDD" id="cd12151">
    <property type="entry name" value="F1-ATPase_gamma"/>
    <property type="match status" value="1"/>
</dbReference>
<dbReference type="FunFam" id="1.10.287.80:FF:000005">
    <property type="entry name" value="ATP synthase gamma chain"/>
    <property type="match status" value="1"/>
</dbReference>
<dbReference type="Gene3D" id="3.40.1380.10">
    <property type="match status" value="1"/>
</dbReference>
<dbReference type="Gene3D" id="1.10.287.80">
    <property type="entry name" value="ATP synthase, gamma subunit, helix hairpin domain"/>
    <property type="match status" value="1"/>
</dbReference>
<dbReference type="HAMAP" id="MF_00815">
    <property type="entry name" value="ATP_synth_gamma_bact"/>
    <property type="match status" value="1"/>
</dbReference>
<dbReference type="InterPro" id="IPR035968">
    <property type="entry name" value="ATP_synth_F1_ATPase_gsu"/>
</dbReference>
<dbReference type="InterPro" id="IPR000131">
    <property type="entry name" value="ATP_synth_F1_gsu"/>
</dbReference>
<dbReference type="InterPro" id="IPR023632">
    <property type="entry name" value="ATP_synth_F1_gsu_CS"/>
</dbReference>
<dbReference type="NCBIfam" id="TIGR01146">
    <property type="entry name" value="ATPsyn_F1gamma"/>
    <property type="match status" value="1"/>
</dbReference>
<dbReference type="NCBIfam" id="NF004144">
    <property type="entry name" value="PRK05621.1-1"/>
    <property type="match status" value="1"/>
</dbReference>
<dbReference type="PANTHER" id="PTHR11693">
    <property type="entry name" value="ATP SYNTHASE GAMMA CHAIN"/>
    <property type="match status" value="1"/>
</dbReference>
<dbReference type="PANTHER" id="PTHR11693:SF22">
    <property type="entry name" value="ATP SYNTHASE SUBUNIT GAMMA, MITOCHONDRIAL"/>
    <property type="match status" value="1"/>
</dbReference>
<dbReference type="Pfam" id="PF00231">
    <property type="entry name" value="ATP-synt"/>
    <property type="match status" value="1"/>
</dbReference>
<dbReference type="PRINTS" id="PR00126">
    <property type="entry name" value="ATPASEGAMMA"/>
</dbReference>
<dbReference type="SUPFAM" id="SSF52943">
    <property type="entry name" value="ATP synthase (F1-ATPase), gamma subunit"/>
    <property type="match status" value="1"/>
</dbReference>
<dbReference type="PROSITE" id="PS00153">
    <property type="entry name" value="ATPASE_GAMMA"/>
    <property type="match status" value="1"/>
</dbReference>
<comment type="function">
    <text evidence="1">Produces ATP from ADP in the presence of a proton gradient across the membrane. The gamma chain is believed to be important in regulating ATPase activity and the flow of protons through the CF(0) complex.</text>
</comment>
<comment type="subunit">
    <text evidence="1">F-type ATPases have 2 components, CF(1) - the catalytic core - and CF(0) - the membrane proton channel. CF(1) has five subunits: alpha(3), beta(3), gamma(1), delta(1), epsilon(1). CF(0) has three main subunits: a, b and c.</text>
</comment>
<comment type="subcellular location">
    <subcellularLocation>
        <location evidence="1">Cell inner membrane</location>
        <topology evidence="1">Peripheral membrane protein</topology>
    </subcellularLocation>
</comment>
<comment type="similarity">
    <text evidence="1">Belongs to the ATPase gamma chain family.</text>
</comment>
<sequence>MANLKEIRAKVTSIQSTQKITRAMQMVAASKMRRAQERMEVGRPYADSMRRVISHLVHASSDYKHPYMVSRPVNRVGYIVITSDRGLAGGLNINLFKALSKNIQKYQEQSVQAEFAVIGAKGVSFFKSFGGKVTSAVTDYGDKPTFEQINAPVQAMLDDYTNGKIDRIYVVYNKFVNAMTQKPTVNQLVPLPESAFGEEESGIQTELSWDYIYEPDIKTLIDELLGRYIESIVYQAVMENIASEQSSRMVAMKAATDNAGDLINDLQLVYNKLRQAAITREISEIVGGAAAVS</sequence>
<protein>
    <recommendedName>
        <fullName evidence="1">ATP synthase gamma chain</fullName>
    </recommendedName>
    <alternativeName>
        <fullName evidence="1">ATP synthase F1 sector gamma subunit</fullName>
    </alternativeName>
    <alternativeName>
        <fullName evidence="1">F-ATPase gamma subunit</fullName>
    </alternativeName>
</protein>
<accession>Q1Q898</accession>
<proteinExistence type="inferred from homology"/>
<name>ATPG_PSYCK</name>
<evidence type="ECO:0000255" key="1">
    <source>
        <dbReference type="HAMAP-Rule" id="MF_00815"/>
    </source>
</evidence>
<keyword id="KW-0066">ATP synthesis</keyword>
<keyword id="KW-0997">Cell inner membrane</keyword>
<keyword id="KW-1003">Cell membrane</keyword>
<keyword id="KW-0139">CF(1)</keyword>
<keyword id="KW-0375">Hydrogen ion transport</keyword>
<keyword id="KW-0406">Ion transport</keyword>
<keyword id="KW-0472">Membrane</keyword>
<keyword id="KW-0813">Transport</keyword>
<gene>
    <name evidence="1" type="primary">atpG</name>
    <name type="ordered locus">Pcryo_2328</name>
</gene>
<organism>
    <name type="scientific">Psychrobacter cryohalolentis (strain ATCC BAA-1226 / DSM 17306 / VKM B-2378 / K5)</name>
    <dbReference type="NCBI Taxonomy" id="335284"/>
    <lineage>
        <taxon>Bacteria</taxon>
        <taxon>Pseudomonadati</taxon>
        <taxon>Pseudomonadota</taxon>
        <taxon>Gammaproteobacteria</taxon>
        <taxon>Moraxellales</taxon>
        <taxon>Moraxellaceae</taxon>
        <taxon>Psychrobacter</taxon>
    </lineage>
</organism>